<sequence length="62" mass="6621">MRNMVNKDQVAGLAKQLKGSVKQAAGKATGNRRTQAEGMADKVAGKVQKAYGDVKDKVKKAF</sequence>
<comment type="similarity">
    <text evidence="2">Belongs to the UPF0337 (CsbD) family.</text>
</comment>
<accession>Q983T9</accession>
<evidence type="ECO:0000256" key="1">
    <source>
        <dbReference type="SAM" id="MobiDB-lite"/>
    </source>
</evidence>
<evidence type="ECO:0000305" key="2"/>
<feature type="chain" id="PRO_0000210021" description="UPF0337 protein mll8179">
    <location>
        <begin position="1"/>
        <end position="62"/>
    </location>
</feature>
<feature type="region of interest" description="Disordered" evidence="1">
    <location>
        <begin position="1"/>
        <end position="42"/>
    </location>
</feature>
<organism>
    <name type="scientific">Mesorhizobium japonicum (strain LMG 29417 / CECT 9101 / MAFF 303099)</name>
    <name type="common">Mesorhizobium loti (strain MAFF 303099)</name>
    <dbReference type="NCBI Taxonomy" id="266835"/>
    <lineage>
        <taxon>Bacteria</taxon>
        <taxon>Pseudomonadati</taxon>
        <taxon>Pseudomonadota</taxon>
        <taxon>Alphaproteobacteria</taxon>
        <taxon>Hyphomicrobiales</taxon>
        <taxon>Phyllobacteriaceae</taxon>
        <taxon>Mesorhizobium</taxon>
    </lineage>
</organism>
<dbReference type="EMBL" id="BA000012">
    <property type="protein sequence ID" value="BAB53791.1"/>
    <property type="molecule type" value="Genomic_DNA"/>
</dbReference>
<dbReference type="RefSeq" id="WP_010915417.1">
    <property type="nucleotide sequence ID" value="NC_002678.2"/>
</dbReference>
<dbReference type="SMR" id="Q983T9"/>
<dbReference type="KEGG" id="mlo:mll8179"/>
<dbReference type="eggNOG" id="COG3237">
    <property type="taxonomic scope" value="Bacteria"/>
</dbReference>
<dbReference type="HOGENOM" id="CLU_135567_3_3_5"/>
<dbReference type="Proteomes" id="UP000000552">
    <property type="component" value="Chromosome"/>
</dbReference>
<dbReference type="Gene3D" id="1.10.1470.10">
    <property type="entry name" value="YjbJ"/>
    <property type="match status" value="1"/>
</dbReference>
<dbReference type="InterPro" id="IPR008462">
    <property type="entry name" value="CsbD"/>
</dbReference>
<dbReference type="InterPro" id="IPR050423">
    <property type="entry name" value="UPF0337_stress_rsp"/>
</dbReference>
<dbReference type="InterPro" id="IPR036629">
    <property type="entry name" value="YjbJ_sf"/>
</dbReference>
<dbReference type="PANTHER" id="PTHR34977">
    <property type="entry name" value="UPF0337 PROTEIN YJBJ"/>
    <property type="match status" value="1"/>
</dbReference>
<dbReference type="PANTHER" id="PTHR34977:SF1">
    <property type="entry name" value="UPF0337 PROTEIN YJBJ"/>
    <property type="match status" value="1"/>
</dbReference>
<dbReference type="Pfam" id="PF05532">
    <property type="entry name" value="CsbD"/>
    <property type="match status" value="1"/>
</dbReference>
<dbReference type="SUPFAM" id="SSF69047">
    <property type="entry name" value="Hypothetical protein YjbJ"/>
    <property type="match status" value="1"/>
</dbReference>
<name>Y8179_RHILO</name>
<gene>
    <name type="ordered locus">mll8179</name>
</gene>
<proteinExistence type="inferred from homology"/>
<protein>
    <recommendedName>
        <fullName>UPF0337 protein mll8179</fullName>
    </recommendedName>
</protein>
<reference key="1">
    <citation type="journal article" date="2000" name="DNA Res.">
        <title>Complete genome structure of the nitrogen-fixing symbiotic bacterium Mesorhizobium loti.</title>
        <authorList>
            <person name="Kaneko T."/>
            <person name="Nakamura Y."/>
            <person name="Sato S."/>
            <person name="Asamizu E."/>
            <person name="Kato T."/>
            <person name="Sasamoto S."/>
            <person name="Watanabe A."/>
            <person name="Idesawa K."/>
            <person name="Ishikawa A."/>
            <person name="Kawashima K."/>
            <person name="Kimura T."/>
            <person name="Kishida Y."/>
            <person name="Kiyokawa C."/>
            <person name="Kohara M."/>
            <person name="Matsumoto M."/>
            <person name="Matsuno A."/>
            <person name="Mochizuki Y."/>
            <person name="Nakayama S."/>
            <person name="Nakazaki N."/>
            <person name="Shimpo S."/>
            <person name="Sugimoto M."/>
            <person name="Takeuchi C."/>
            <person name="Yamada M."/>
            <person name="Tabata S."/>
        </authorList>
    </citation>
    <scope>NUCLEOTIDE SEQUENCE [LARGE SCALE GENOMIC DNA]</scope>
    <source>
        <strain>LMG 29417 / CECT 9101 / MAFF 303099</strain>
    </source>
</reference>